<evidence type="ECO:0000250" key="1"/>
<evidence type="ECO:0000255" key="2"/>
<evidence type="ECO:0000269" key="3">
    <source ref="1"/>
</evidence>
<evidence type="ECO:0000305" key="4"/>
<proteinExistence type="evidence at transcript level"/>
<accession>P0CZ08</accession>
<dbReference type="STRING" id="4565.P0CZ08"/>
<dbReference type="Proteomes" id="UP000019116">
    <property type="component" value="Unplaced"/>
</dbReference>
<dbReference type="ExpressionAtlas" id="P0CZ08">
    <property type="expression patterns" value="baseline and differential"/>
</dbReference>
<dbReference type="GO" id="GO:0045735">
    <property type="term" value="F:nutrient reservoir activity"/>
    <property type="evidence" value="ECO:0007669"/>
    <property type="project" value="UniProtKB-KW"/>
</dbReference>
<dbReference type="CDD" id="cd00261">
    <property type="entry name" value="AAI_SS"/>
    <property type="match status" value="1"/>
</dbReference>
<dbReference type="Gene3D" id="1.10.110.10">
    <property type="entry name" value="Plant lipid-transfer and hydrophobic proteins"/>
    <property type="match status" value="1"/>
</dbReference>
<dbReference type="InterPro" id="IPR036312">
    <property type="entry name" value="Bifun_inhib/LTP/seed_sf"/>
</dbReference>
<dbReference type="InterPro" id="IPR016140">
    <property type="entry name" value="Bifunc_inhib/LTP/seed_store"/>
</dbReference>
<dbReference type="InterPro" id="IPR001954">
    <property type="entry name" value="Glia_glutenin"/>
</dbReference>
<dbReference type="PANTHER" id="PTHR33454">
    <property type="entry name" value="PROLAMIN PPROL 14P"/>
    <property type="match status" value="1"/>
</dbReference>
<dbReference type="PANTHER" id="PTHR33454:SF19">
    <property type="entry name" value="PROLAMIN PPROL 14P"/>
    <property type="match status" value="1"/>
</dbReference>
<dbReference type="Pfam" id="PF13016">
    <property type="entry name" value="Gliadin"/>
    <property type="match status" value="1"/>
</dbReference>
<dbReference type="PRINTS" id="PR00208">
    <property type="entry name" value="GLIADGLUTEN"/>
</dbReference>
<dbReference type="SMART" id="SM00499">
    <property type="entry name" value="AAI"/>
    <property type="match status" value="1"/>
</dbReference>
<dbReference type="SUPFAM" id="SSF47699">
    <property type="entry name" value="Bifunctional inhibitor/lipid-transfer protein/seed storage 2S albumin"/>
    <property type="match status" value="1"/>
</dbReference>
<reference key="1">
    <citation type="journal article" date="2006" name="J. Cereal Sci.">
        <title>Transcriptome analysis reveals differentially expressed storage protein transcripts in seeds of Aegilops and wheat.</title>
        <authorList>
            <person name="Kan Y."/>
            <person name="Wan Y."/>
            <person name="Beaudoin F."/>
            <person name="Leader D.J."/>
            <person name="Edwards K."/>
            <person name="Poole R."/>
            <person name="Wang D."/>
            <person name="Mitchell R.A.C."/>
            <person name="Shewry P.R."/>
        </authorList>
    </citation>
    <scope>NUCLEOTIDE SEQUENCE [MRNA]</scope>
    <scope>DEVELOPMENTAL STAGE</scope>
    <source>
        <strain>cv. Cadenza</strain>
    </source>
</reference>
<keyword id="KW-1015">Disulfide bond</keyword>
<keyword id="KW-1185">Reference proteome</keyword>
<keyword id="KW-0708">Seed storage protein</keyword>
<keyword id="KW-0732">Signal</keyword>
<keyword id="KW-0758">Storage protein</keyword>
<comment type="function">
    <text evidence="1">Seed storage protein. Not integrated in the gluten polymer through disulfide bonds, unless incorporated by reduction and reoxidation during dough making. Increases dough strength and bread volume, but decreases dough stability when added into a base wheat flour (By similarity).</text>
</comment>
<comment type="developmental stage">
    <text evidence="3">Expressed in developing grains.</text>
</comment>
<comment type="PTM">
    <text evidence="4">Contains 7 disulfide bonds.</text>
</comment>
<comment type="similarity">
    <text evidence="4">Belongs to the prolamin family.</text>
</comment>
<name>AVLA3_WHEAT</name>
<organism>
    <name type="scientific">Triticum aestivum</name>
    <name type="common">Wheat</name>
    <dbReference type="NCBI Taxonomy" id="4565"/>
    <lineage>
        <taxon>Eukaryota</taxon>
        <taxon>Viridiplantae</taxon>
        <taxon>Streptophyta</taxon>
        <taxon>Embryophyta</taxon>
        <taxon>Tracheophyta</taxon>
        <taxon>Spermatophyta</taxon>
        <taxon>Magnoliopsida</taxon>
        <taxon>Liliopsida</taxon>
        <taxon>Poales</taxon>
        <taxon>Poaceae</taxon>
        <taxon>BOP clade</taxon>
        <taxon>Pooideae</taxon>
        <taxon>Triticodae</taxon>
        <taxon>Triticeae</taxon>
        <taxon>Triticinae</taxon>
        <taxon>Triticum</taxon>
    </lineage>
</organism>
<feature type="signal peptide" evidence="2">
    <location>
        <begin position="1"/>
        <end position="19"/>
    </location>
</feature>
<feature type="chain" id="PRO_0000410694" description="Avenin-like a3">
    <location>
        <begin position="20"/>
        <end position="175"/>
    </location>
</feature>
<protein>
    <recommendedName>
        <fullName>Avenin-like a3</fullName>
    </recommendedName>
</protein>
<sequence>MKTMFLLALLAFTATSAVAQLYTTCSQGYGQCQQQPQPQPQMNTCAAFLQQCIQTPYVQSQMWQASGCQLMRQQCCQPLAQISEQARCQAVCSVSQIIMRQQQGQRFGQPQQQQGQSFGQPQQQVPVEIMRMVLQTLPSMCSVNIPQYCTTTPCSTITPAIYSIPMTATCAGGAC</sequence>